<name>CTAA_ANAMM</name>
<feature type="chain" id="PRO_0000349009" description="Heme A synthase">
    <location>
        <begin position="1"/>
        <end position="341"/>
    </location>
</feature>
<feature type="transmembrane region" description="Helical" evidence="1">
    <location>
        <begin position="7"/>
        <end position="27"/>
    </location>
</feature>
<feature type="transmembrane region" description="Helical" evidence="1">
    <location>
        <begin position="92"/>
        <end position="112"/>
    </location>
</feature>
<feature type="transmembrane region" description="Helical" evidence="1">
    <location>
        <begin position="118"/>
        <end position="138"/>
    </location>
</feature>
<feature type="transmembrane region" description="Helical" evidence="1">
    <location>
        <begin position="159"/>
        <end position="179"/>
    </location>
</feature>
<feature type="transmembrane region" description="Helical" evidence="1">
    <location>
        <begin position="190"/>
        <end position="210"/>
    </location>
</feature>
<feature type="transmembrane region" description="Helical" evidence="1">
    <location>
        <begin position="253"/>
        <end position="273"/>
    </location>
</feature>
<feature type="transmembrane region" description="Helical" evidence="1">
    <location>
        <begin position="280"/>
        <end position="300"/>
    </location>
</feature>
<feature type="transmembrane region" description="Helical" evidence="1">
    <location>
        <begin position="302"/>
        <end position="322"/>
    </location>
</feature>
<feature type="binding site" description="axial binding residue" evidence="1">
    <location>
        <position position="255"/>
    </location>
    <ligand>
        <name>heme</name>
        <dbReference type="ChEBI" id="CHEBI:30413"/>
    </ligand>
    <ligandPart>
        <name>Fe</name>
        <dbReference type="ChEBI" id="CHEBI:18248"/>
    </ligandPart>
</feature>
<feature type="binding site" description="axial binding residue" evidence="1">
    <location>
        <position position="308"/>
    </location>
    <ligand>
        <name>heme</name>
        <dbReference type="ChEBI" id="CHEBI:30413"/>
    </ligand>
    <ligandPart>
        <name>Fe</name>
        <dbReference type="ChEBI" id="CHEBI:18248"/>
    </ligandPart>
</feature>
<sequence>MKAHFGVTVWLGVCCSMTLLMVVIGGITRLTHSGLSITEWQPIVGVVPPIGDEAWLREKEKYAQTPEYRHRAADISLDDFKRIYIIEYIHRLFGRALGAVFCLPIPYFAITKRIDRAMVAKLLIVALLGGMQGAMGWFMVKSGLVDTPRVSHYRLAGHLFLTILLFSILWHSFLRCAGVRSTTTTTNARFFTAAAVVGLTVLQMVLGALVAGLDAGLTYNTFPLMDGAIIPQSLFSAKLWHGGFLHDVTAVQFLHRLVAVLIVVCAAPLPFWLKTRGAWLFLACVALQFLLGVATLVSVVHIFLAAMHQVFGFVTLAAGVHMLCRLRREGSTCISGHAGIS</sequence>
<keyword id="KW-1003">Cell membrane</keyword>
<keyword id="KW-0350">Heme biosynthesis</keyword>
<keyword id="KW-0408">Iron</keyword>
<keyword id="KW-0472">Membrane</keyword>
<keyword id="KW-0479">Metal-binding</keyword>
<keyword id="KW-0560">Oxidoreductase</keyword>
<keyword id="KW-0812">Transmembrane</keyword>
<keyword id="KW-1133">Transmembrane helix</keyword>
<comment type="function">
    <text evidence="1">Catalyzes the conversion of heme O to heme A by two successive hydroxylations of the methyl group at C8. The first hydroxylation forms heme I, the second hydroxylation results in an unstable dihydroxymethyl group, which spontaneously dehydrates, resulting in the formyl group of heme A.</text>
</comment>
<comment type="catalytic activity">
    <reaction evidence="1">
        <text>Fe(II)-heme o + 2 A + H2O = Fe(II)-heme a + 2 AH2</text>
        <dbReference type="Rhea" id="RHEA:63388"/>
        <dbReference type="ChEBI" id="CHEBI:13193"/>
        <dbReference type="ChEBI" id="CHEBI:15377"/>
        <dbReference type="ChEBI" id="CHEBI:17499"/>
        <dbReference type="ChEBI" id="CHEBI:60530"/>
        <dbReference type="ChEBI" id="CHEBI:61715"/>
        <dbReference type="EC" id="1.17.99.9"/>
    </reaction>
    <physiologicalReaction direction="left-to-right" evidence="1">
        <dbReference type="Rhea" id="RHEA:63389"/>
    </physiologicalReaction>
</comment>
<comment type="cofactor">
    <cofactor evidence="1">
        <name>heme b</name>
        <dbReference type="ChEBI" id="CHEBI:60344"/>
    </cofactor>
</comment>
<comment type="pathway">
    <text evidence="1">Porphyrin-containing compound metabolism; heme A biosynthesis; heme A from heme O: step 1/1.</text>
</comment>
<comment type="subunit">
    <text evidence="1">Interacts with CtaB.</text>
</comment>
<comment type="subcellular location">
    <subcellularLocation>
        <location evidence="1">Cell membrane</location>
        <topology evidence="1">Multi-pass membrane protein</topology>
    </subcellularLocation>
</comment>
<comment type="similarity">
    <text evidence="1">Belongs to the COX15/CtaA family. Type 2 subfamily.</text>
</comment>
<dbReference type="EC" id="1.17.99.9" evidence="1"/>
<dbReference type="EMBL" id="CP000030">
    <property type="protein sequence ID" value="AAV86282.1"/>
    <property type="molecule type" value="Genomic_DNA"/>
</dbReference>
<dbReference type="SMR" id="Q5PBP7"/>
<dbReference type="KEGG" id="ama:AM141"/>
<dbReference type="HOGENOM" id="CLU_017627_0_0_5"/>
<dbReference type="UniPathway" id="UPA00269">
    <property type="reaction ID" value="UER00713"/>
</dbReference>
<dbReference type="GO" id="GO:0005886">
    <property type="term" value="C:plasma membrane"/>
    <property type="evidence" value="ECO:0007669"/>
    <property type="project" value="UniProtKB-SubCell"/>
</dbReference>
<dbReference type="GO" id="GO:0046872">
    <property type="term" value="F:metal ion binding"/>
    <property type="evidence" value="ECO:0007669"/>
    <property type="project" value="UniProtKB-KW"/>
</dbReference>
<dbReference type="GO" id="GO:0016653">
    <property type="term" value="F:oxidoreductase activity, acting on NAD(P)H, heme protein as acceptor"/>
    <property type="evidence" value="ECO:0007669"/>
    <property type="project" value="InterPro"/>
</dbReference>
<dbReference type="GO" id="GO:0006784">
    <property type="term" value="P:heme A biosynthetic process"/>
    <property type="evidence" value="ECO:0007669"/>
    <property type="project" value="UniProtKB-UniRule"/>
</dbReference>
<dbReference type="HAMAP" id="MF_01665">
    <property type="entry name" value="HemeA_synth_type2"/>
    <property type="match status" value="1"/>
</dbReference>
<dbReference type="InterPro" id="IPR003780">
    <property type="entry name" value="COX15/CtaA_fam"/>
</dbReference>
<dbReference type="InterPro" id="IPR023754">
    <property type="entry name" value="HemeA_Synthase_type2"/>
</dbReference>
<dbReference type="PANTHER" id="PTHR23289">
    <property type="entry name" value="CYTOCHROME C OXIDASE ASSEMBLY PROTEIN COX15"/>
    <property type="match status" value="1"/>
</dbReference>
<dbReference type="PANTHER" id="PTHR23289:SF2">
    <property type="entry name" value="CYTOCHROME C OXIDASE ASSEMBLY PROTEIN COX15 HOMOLOG"/>
    <property type="match status" value="1"/>
</dbReference>
<dbReference type="Pfam" id="PF02628">
    <property type="entry name" value="COX15-CtaA"/>
    <property type="match status" value="1"/>
</dbReference>
<protein>
    <recommendedName>
        <fullName evidence="1">Heme A synthase</fullName>
        <shortName evidence="1">HAS</shortName>
        <ecNumber evidence="1">1.17.99.9</ecNumber>
    </recommendedName>
    <alternativeName>
        <fullName evidence="1">Cytochrome aa3-controlling protein</fullName>
    </alternativeName>
</protein>
<organism>
    <name type="scientific">Anaplasma marginale (strain St. Maries)</name>
    <dbReference type="NCBI Taxonomy" id="234826"/>
    <lineage>
        <taxon>Bacteria</taxon>
        <taxon>Pseudomonadati</taxon>
        <taxon>Pseudomonadota</taxon>
        <taxon>Alphaproteobacteria</taxon>
        <taxon>Rickettsiales</taxon>
        <taxon>Anaplasmataceae</taxon>
        <taxon>Anaplasma</taxon>
    </lineage>
</organism>
<evidence type="ECO:0000255" key="1">
    <source>
        <dbReference type="HAMAP-Rule" id="MF_01665"/>
    </source>
</evidence>
<gene>
    <name evidence="1" type="primary">ctaA</name>
    <name type="synonym">coxW</name>
    <name type="ordered locus">AM141</name>
</gene>
<reference key="1">
    <citation type="journal article" date="2005" name="Proc. Natl. Acad. Sci. U.S.A.">
        <title>Complete genome sequencing of Anaplasma marginale reveals that the surface is skewed to two superfamilies of outer membrane proteins.</title>
        <authorList>
            <person name="Brayton K.A."/>
            <person name="Kappmeyer L.S."/>
            <person name="Herndon D.R."/>
            <person name="Dark M.J."/>
            <person name="Tibbals D.L."/>
            <person name="Palmer G.H."/>
            <person name="McGuire T.C."/>
            <person name="Knowles D.P. Jr."/>
        </authorList>
    </citation>
    <scope>NUCLEOTIDE SEQUENCE [LARGE SCALE GENOMIC DNA]</scope>
    <source>
        <strain>St. Maries</strain>
    </source>
</reference>
<proteinExistence type="inferred from homology"/>
<accession>Q5PBP7</accession>